<dbReference type="EMBL" id="AE002160">
    <property type="protein sequence ID" value="AAF38997.1"/>
    <property type="molecule type" value="Genomic_DNA"/>
</dbReference>
<dbReference type="PIR" id="B81739">
    <property type="entry name" value="B81739"/>
</dbReference>
<dbReference type="RefSeq" id="WP_010229436.1">
    <property type="nucleotide sequence ID" value="NZ_CP063055.1"/>
</dbReference>
<dbReference type="SMR" id="Q9PLI1"/>
<dbReference type="GeneID" id="1245653"/>
<dbReference type="KEGG" id="cmu:TC_0119"/>
<dbReference type="HOGENOM" id="CLU_148744_0_0_0"/>
<dbReference type="OrthoDB" id="22023at2"/>
<dbReference type="Proteomes" id="UP000000800">
    <property type="component" value="Chromosome"/>
</dbReference>
<dbReference type="GO" id="GO:0003677">
    <property type="term" value="F:DNA binding"/>
    <property type="evidence" value="ECO:0007669"/>
    <property type="project" value="UniProtKB-KW"/>
</dbReference>
<dbReference type="GO" id="GO:0030527">
    <property type="term" value="F:structural constituent of chromatin"/>
    <property type="evidence" value="ECO:0007669"/>
    <property type="project" value="InterPro"/>
</dbReference>
<dbReference type="InterPro" id="IPR010886">
    <property type="entry name" value="Hc1"/>
</dbReference>
<dbReference type="Pfam" id="PF07432">
    <property type="entry name" value="Hc1"/>
    <property type="match status" value="1"/>
</dbReference>
<sequence>MALKDTAKKMTDLLESIQQNLLKAEKGNKAAAQRVRTESIKLEKIAKVYRKESIKAEKMGLMKRSKVAAKKAKAAAKKPAKATKVVTKKACTKKTCATKAKAKPVKKAATKTKAKVTKKVRSTKK</sequence>
<protein>
    <recommendedName>
        <fullName>Histone H1-like protein HC1</fullName>
    </recommendedName>
</protein>
<reference key="1">
    <citation type="journal article" date="2000" name="Nucleic Acids Res.">
        <title>Genome sequences of Chlamydia trachomatis MoPn and Chlamydia pneumoniae AR39.</title>
        <authorList>
            <person name="Read T.D."/>
            <person name="Brunham R.C."/>
            <person name="Shen C."/>
            <person name="Gill S.R."/>
            <person name="Heidelberg J.F."/>
            <person name="White O."/>
            <person name="Hickey E.K."/>
            <person name="Peterson J.D."/>
            <person name="Utterback T.R."/>
            <person name="Berry K.J."/>
            <person name="Bass S."/>
            <person name="Linher K.D."/>
            <person name="Weidman J.F."/>
            <person name="Khouri H.M."/>
            <person name="Craven B."/>
            <person name="Bowman C."/>
            <person name="Dodson R.J."/>
            <person name="Gwinn M.L."/>
            <person name="Nelson W.C."/>
            <person name="DeBoy R.T."/>
            <person name="Kolonay J.F."/>
            <person name="McClarty G."/>
            <person name="Salzberg S.L."/>
            <person name="Eisen J.A."/>
            <person name="Fraser C.M."/>
        </authorList>
    </citation>
    <scope>NUCLEOTIDE SEQUENCE [LARGE SCALE GENOMIC DNA]</scope>
    <source>
        <strain>MoPn / Nigg</strain>
    </source>
</reference>
<name>HCT1_CHLMU</name>
<gene>
    <name type="primary">hctA</name>
    <name type="ordered locus">TC_0119</name>
</gene>
<proteinExistence type="evidence at transcript level"/>
<keyword id="KW-0238">DNA-binding</keyword>
<keyword id="KW-0677">Repeat</keyword>
<evidence type="ECO:0000250" key="1"/>
<evidence type="ECO:0000305" key="2"/>
<accession>Q9PLI1</accession>
<comment type="function">
    <text evidence="1">Might have a role analogous to that of eukaryotic histone proteins.</text>
</comment>
<comment type="developmental stage">
    <text>Specific to the EB (elementary body) form in the life cycle of chlamydiae.</text>
</comment>
<comment type="similarity">
    <text evidence="2">Belongs to the histone H1/H5 family. HCT subfamily.</text>
</comment>
<organism>
    <name type="scientific">Chlamydia muridarum (strain MoPn / Nigg)</name>
    <dbReference type="NCBI Taxonomy" id="243161"/>
    <lineage>
        <taxon>Bacteria</taxon>
        <taxon>Pseudomonadati</taxon>
        <taxon>Chlamydiota</taxon>
        <taxon>Chlamydiia</taxon>
        <taxon>Chlamydiales</taxon>
        <taxon>Chlamydiaceae</taxon>
        <taxon>Chlamydia/Chlamydophila group</taxon>
        <taxon>Chlamydia</taxon>
    </lineage>
</organism>
<feature type="chain" id="PRO_0000196016" description="Histone H1-like protein HC1">
    <location>
        <begin position="1"/>
        <end position="125"/>
    </location>
</feature>